<dbReference type="EC" id="6.3.5.-" evidence="1"/>
<dbReference type="EMBL" id="AE017224">
    <property type="protein sequence ID" value="AAX76040.1"/>
    <property type="molecule type" value="Genomic_DNA"/>
</dbReference>
<dbReference type="RefSeq" id="WP_002966038.1">
    <property type="nucleotide sequence ID" value="NC_006933.1"/>
</dbReference>
<dbReference type="SMR" id="Q577Z4"/>
<dbReference type="EnsemblBacteria" id="AAX76040">
    <property type="protein sequence ID" value="AAX76040"/>
    <property type="gene ID" value="BruAb2_0629"/>
</dbReference>
<dbReference type="GeneID" id="97535281"/>
<dbReference type="KEGG" id="bmb:BruAb2_0629"/>
<dbReference type="HOGENOM" id="CLU_105899_2_0_5"/>
<dbReference type="Proteomes" id="UP000000540">
    <property type="component" value="Chromosome II"/>
</dbReference>
<dbReference type="GO" id="GO:0050566">
    <property type="term" value="F:asparaginyl-tRNA synthase (glutamine-hydrolyzing) activity"/>
    <property type="evidence" value="ECO:0007669"/>
    <property type="project" value="RHEA"/>
</dbReference>
<dbReference type="GO" id="GO:0005524">
    <property type="term" value="F:ATP binding"/>
    <property type="evidence" value="ECO:0007669"/>
    <property type="project" value="UniProtKB-KW"/>
</dbReference>
<dbReference type="GO" id="GO:0050567">
    <property type="term" value="F:glutaminyl-tRNA synthase (glutamine-hydrolyzing) activity"/>
    <property type="evidence" value="ECO:0007669"/>
    <property type="project" value="UniProtKB-UniRule"/>
</dbReference>
<dbReference type="GO" id="GO:0070681">
    <property type="term" value="P:glutaminyl-tRNAGln biosynthesis via transamidation"/>
    <property type="evidence" value="ECO:0007669"/>
    <property type="project" value="TreeGrafter"/>
</dbReference>
<dbReference type="GO" id="GO:0006450">
    <property type="term" value="P:regulation of translational fidelity"/>
    <property type="evidence" value="ECO:0007669"/>
    <property type="project" value="InterPro"/>
</dbReference>
<dbReference type="GO" id="GO:0006412">
    <property type="term" value="P:translation"/>
    <property type="evidence" value="ECO:0007669"/>
    <property type="project" value="UniProtKB-UniRule"/>
</dbReference>
<dbReference type="Gene3D" id="1.10.20.60">
    <property type="entry name" value="Glu-tRNAGln amidotransferase C subunit, N-terminal domain"/>
    <property type="match status" value="1"/>
</dbReference>
<dbReference type="HAMAP" id="MF_00122">
    <property type="entry name" value="GatC"/>
    <property type="match status" value="1"/>
</dbReference>
<dbReference type="InterPro" id="IPR036113">
    <property type="entry name" value="Asp/Glu-ADT_sf_sub_c"/>
</dbReference>
<dbReference type="InterPro" id="IPR003837">
    <property type="entry name" value="GatC"/>
</dbReference>
<dbReference type="NCBIfam" id="TIGR00135">
    <property type="entry name" value="gatC"/>
    <property type="match status" value="1"/>
</dbReference>
<dbReference type="PANTHER" id="PTHR15004">
    <property type="entry name" value="GLUTAMYL-TRNA(GLN) AMIDOTRANSFERASE SUBUNIT C, MITOCHONDRIAL"/>
    <property type="match status" value="1"/>
</dbReference>
<dbReference type="PANTHER" id="PTHR15004:SF0">
    <property type="entry name" value="GLUTAMYL-TRNA(GLN) AMIDOTRANSFERASE SUBUNIT C, MITOCHONDRIAL"/>
    <property type="match status" value="1"/>
</dbReference>
<dbReference type="Pfam" id="PF02686">
    <property type="entry name" value="GatC"/>
    <property type="match status" value="1"/>
</dbReference>
<dbReference type="SUPFAM" id="SSF141000">
    <property type="entry name" value="Glu-tRNAGln amidotransferase C subunit"/>
    <property type="match status" value="1"/>
</dbReference>
<proteinExistence type="inferred from homology"/>
<sequence length="95" mass="10303">MSVDISTVKRVAHLARIAVSEDDAERMTGELNAILGFVEQLNEVDVEGIEPMTSVTPMKMRMREDKVTDGGIAAAVVANAPVTEDNFFVVPKVVE</sequence>
<organism>
    <name type="scientific">Brucella abortus biovar 1 (strain 9-941)</name>
    <dbReference type="NCBI Taxonomy" id="262698"/>
    <lineage>
        <taxon>Bacteria</taxon>
        <taxon>Pseudomonadati</taxon>
        <taxon>Pseudomonadota</taxon>
        <taxon>Alphaproteobacteria</taxon>
        <taxon>Hyphomicrobiales</taxon>
        <taxon>Brucellaceae</taxon>
        <taxon>Brucella/Ochrobactrum group</taxon>
        <taxon>Brucella</taxon>
    </lineage>
</organism>
<comment type="function">
    <text evidence="1">Allows the formation of correctly charged Asn-tRNA(Asn) or Gln-tRNA(Gln) through the transamidation of misacylated Asp-tRNA(Asn) or Glu-tRNA(Gln) in organisms which lack either or both of asparaginyl-tRNA or glutaminyl-tRNA synthetases. The reaction takes place in the presence of glutamine and ATP through an activated phospho-Asp-tRNA(Asn) or phospho-Glu-tRNA(Gln).</text>
</comment>
<comment type="catalytic activity">
    <reaction evidence="1">
        <text>L-glutamyl-tRNA(Gln) + L-glutamine + ATP + H2O = L-glutaminyl-tRNA(Gln) + L-glutamate + ADP + phosphate + H(+)</text>
        <dbReference type="Rhea" id="RHEA:17521"/>
        <dbReference type="Rhea" id="RHEA-COMP:9681"/>
        <dbReference type="Rhea" id="RHEA-COMP:9684"/>
        <dbReference type="ChEBI" id="CHEBI:15377"/>
        <dbReference type="ChEBI" id="CHEBI:15378"/>
        <dbReference type="ChEBI" id="CHEBI:29985"/>
        <dbReference type="ChEBI" id="CHEBI:30616"/>
        <dbReference type="ChEBI" id="CHEBI:43474"/>
        <dbReference type="ChEBI" id="CHEBI:58359"/>
        <dbReference type="ChEBI" id="CHEBI:78520"/>
        <dbReference type="ChEBI" id="CHEBI:78521"/>
        <dbReference type="ChEBI" id="CHEBI:456216"/>
    </reaction>
</comment>
<comment type="catalytic activity">
    <reaction evidence="1">
        <text>L-aspartyl-tRNA(Asn) + L-glutamine + ATP + H2O = L-asparaginyl-tRNA(Asn) + L-glutamate + ADP + phosphate + 2 H(+)</text>
        <dbReference type="Rhea" id="RHEA:14513"/>
        <dbReference type="Rhea" id="RHEA-COMP:9674"/>
        <dbReference type="Rhea" id="RHEA-COMP:9677"/>
        <dbReference type="ChEBI" id="CHEBI:15377"/>
        <dbReference type="ChEBI" id="CHEBI:15378"/>
        <dbReference type="ChEBI" id="CHEBI:29985"/>
        <dbReference type="ChEBI" id="CHEBI:30616"/>
        <dbReference type="ChEBI" id="CHEBI:43474"/>
        <dbReference type="ChEBI" id="CHEBI:58359"/>
        <dbReference type="ChEBI" id="CHEBI:78515"/>
        <dbReference type="ChEBI" id="CHEBI:78516"/>
        <dbReference type="ChEBI" id="CHEBI:456216"/>
    </reaction>
</comment>
<comment type="subunit">
    <text evidence="1">Heterotrimer of A, B and C subunits.</text>
</comment>
<comment type="similarity">
    <text evidence="1">Belongs to the GatC family.</text>
</comment>
<reference key="1">
    <citation type="journal article" date="2005" name="J. Bacteriol.">
        <title>Completion of the genome sequence of Brucella abortus and comparison to the highly similar genomes of Brucella melitensis and Brucella suis.</title>
        <authorList>
            <person name="Halling S.M."/>
            <person name="Peterson-Burch B.D."/>
            <person name="Bricker B.J."/>
            <person name="Zuerner R.L."/>
            <person name="Qing Z."/>
            <person name="Li L.-L."/>
            <person name="Kapur V."/>
            <person name="Alt D.P."/>
            <person name="Olsen S.C."/>
        </authorList>
    </citation>
    <scope>NUCLEOTIDE SEQUENCE [LARGE SCALE GENOMIC DNA]</scope>
    <source>
        <strain>9-941</strain>
    </source>
</reference>
<evidence type="ECO:0000255" key="1">
    <source>
        <dbReference type="HAMAP-Rule" id="MF_00122"/>
    </source>
</evidence>
<keyword id="KW-0067">ATP-binding</keyword>
<keyword id="KW-0436">Ligase</keyword>
<keyword id="KW-0547">Nucleotide-binding</keyword>
<keyword id="KW-0648">Protein biosynthesis</keyword>
<gene>
    <name evidence="1" type="primary">gatC</name>
    <name type="ordered locus">BruAb2_0629</name>
</gene>
<protein>
    <recommendedName>
        <fullName evidence="1">Aspartyl/glutamyl-tRNA(Asn/Gln) amidotransferase subunit C</fullName>
        <shortName evidence="1">Asp/Glu-ADT subunit C</shortName>
        <ecNumber evidence="1">6.3.5.-</ecNumber>
    </recommendedName>
</protein>
<accession>Q577Z4</accession>
<feature type="chain" id="PRO_1000016081" description="Aspartyl/glutamyl-tRNA(Asn/Gln) amidotransferase subunit C">
    <location>
        <begin position="1"/>
        <end position="95"/>
    </location>
</feature>
<name>GATC_BRUAB</name>